<organism>
    <name type="scientific">Bacillus cereus (strain 03BB102)</name>
    <dbReference type="NCBI Taxonomy" id="572264"/>
    <lineage>
        <taxon>Bacteria</taxon>
        <taxon>Bacillati</taxon>
        <taxon>Bacillota</taxon>
        <taxon>Bacilli</taxon>
        <taxon>Bacillales</taxon>
        <taxon>Bacillaceae</taxon>
        <taxon>Bacillus</taxon>
        <taxon>Bacillus cereus group</taxon>
    </lineage>
</organism>
<dbReference type="EC" id="2.8.1.10" evidence="1"/>
<dbReference type="EMBL" id="CP001407">
    <property type="protein sequence ID" value="ACO29394.1"/>
    <property type="molecule type" value="Genomic_DNA"/>
</dbReference>
<dbReference type="RefSeq" id="WP_000931998.1">
    <property type="nucleotide sequence ID" value="NZ_CP009318.1"/>
</dbReference>
<dbReference type="SMR" id="C1EYJ3"/>
<dbReference type="KEGG" id="bcx:BCA_0795"/>
<dbReference type="PATRIC" id="fig|572264.18.peg.740"/>
<dbReference type="UniPathway" id="UPA00060"/>
<dbReference type="Proteomes" id="UP000002210">
    <property type="component" value="Chromosome"/>
</dbReference>
<dbReference type="GO" id="GO:0005737">
    <property type="term" value="C:cytoplasm"/>
    <property type="evidence" value="ECO:0007669"/>
    <property type="project" value="UniProtKB-SubCell"/>
</dbReference>
<dbReference type="GO" id="GO:1990107">
    <property type="term" value="F:thiazole synthase activity"/>
    <property type="evidence" value="ECO:0007669"/>
    <property type="project" value="UniProtKB-EC"/>
</dbReference>
<dbReference type="GO" id="GO:0009229">
    <property type="term" value="P:thiamine diphosphate biosynthetic process"/>
    <property type="evidence" value="ECO:0007669"/>
    <property type="project" value="UniProtKB-UniRule"/>
</dbReference>
<dbReference type="CDD" id="cd04728">
    <property type="entry name" value="ThiG"/>
    <property type="match status" value="1"/>
</dbReference>
<dbReference type="FunFam" id="3.20.20.70:FF:000049">
    <property type="entry name" value="Thiazole synthase"/>
    <property type="match status" value="1"/>
</dbReference>
<dbReference type="Gene3D" id="3.20.20.70">
    <property type="entry name" value="Aldolase class I"/>
    <property type="match status" value="1"/>
</dbReference>
<dbReference type="HAMAP" id="MF_00443">
    <property type="entry name" value="ThiG"/>
    <property type="match status" value="1"/>
</dbReference>
<dbReference type="InterPro" id="IPR013785">
    <property type="entry name" value="Aldolase_TIM"/>
</dbReference>
<dbReference type="InterPro" id="IPR033983">
    <property type="entry name" value="Thiazole_synthase_ThiG"/>
</dbReference>
<dbReference type="InterPro" id="IPR008867">
    <property type="entry name" value="ThiG"/>
</dbReference>
<dbReference type="PANTHER" id="PTHR34266">
    <property type="entry name" value="THIAZOLE SYNTHASE"/>
    <property type="match status" value="1"/>
</dbReference>
<dbReference type="PANTHER" id="PTHR34266:SF2">
    <property type="entry name" value="THIAZOLE SYNTHASE"/>
    <property type="match status" value="1"/>
</dbReference>
<dbReference type="Pfam" id="PF05690">
    <property type="entry name" value="ThiG"/>
    <property type="match status" value="1"/>
</dbReference>
<dbReference type="SUPFAM" id="SSF110399">
    <property type="entry name" value="ThiG-like"/>
    <property type="match status" value="1"/>
</dbReference>
<proteinExistence type="inferred from homology"/>
<reference key="1">
    <citation type="submission" date="2009-02" db="EMBL/GenBank/DDBJ databases">
        <title>Genome sequence of Bacillus cereus 03BB102.</title>
        <authorList>
            <person name="Dodson R.J."/>
            <person name="Jackson P."/>
            <person name="Munk A.C."/>
            <person name="Brettin T."/>
            <person name="Bruce D."/>
            <person name="Detter C."/>
            <person name="Tapia R."/>
            <person name="Han C."/>
            <person name="Sutton G."/>
            <person name="Sims D."/>
        </authorList>
    </citation>
    <scope>NUCLEOTIDE SEQUENCE [LARGE SCALE GENOMIC DNA]</scope>
    <source>
        <strain>03BB102</strain>
    </source>
</reference>
<evidence type="ECO:0000255" key="1">
    <source>
        <dbReference type="HAMAP-Rule" id="MF_00443"/>
    </source>
</evidence>
<name>THIG_BACC3</name>
<keyword id="KW-0963">Cytoplasm</keyword>
<keyword id="KW-0704">Schiff base</keyword>
<keyword id="KW-0784">Thiamine biosynthesis</keyword>
<keyword id="KW-0808">Transferase</keyword>
<sequence>MLNIGPFSFHSRLLLGTGKFPDFDVQQKAIDVSEAEVLTFAVRRMDIFDAKQPNLLEKLDVKKYTLLPNTAGAKNAEEAVRIAKLAKASGLCDMIKVEVIGDDRTLLPDPVETLKASEMLLEEGFIVLPYTSDDVVLARKLQELGVHAIMPGASPIGSGLGIVNPLNLSFIIEQATVPVIVDAGVGSPADAAFAMELGADGVLLNTAVSGAKDPIKMAQAMKLSIEAGRLGFEAGRIARKRCATASSPLEGMSVVE</sequence>
<gene>
    <name evidence="1" type="primary">thiG</name>
    <name type="ordered locus">BCA_0795</name>
</gene>
<protein>
    <recommendedName>
        <fullName evidence="1">Thiazole synthase</fullName>
        <ecNumber evidence="1">2.8.1.10</ecNumber>
    </recommendedName>
</protein>
<accession>C1EYJ3</accession>
<comment type="function">
    <text evidence="1">Catalyzes the rearrangement of 1-deoxy-D-xylulose 5-phosphate (DXP) to produce the thiazole phosphate moiety of thiamine. Sulfur is provided by the thiocarboxylate moiety of the carrier protein ThiS. In vitro, sulfur can be provided by H(2)S.</text>
</comment>
<comment type="catalytic activity">
    <reaction evidence="1">
        <text>[ThiS sulfur-carrier protein]-C-terminal-Gly-aminoethanethioate + 2-iminoacetate + 1-deoxy-D-xylulose 5-phosphate = [ThiS sulfur-carrier protein]-C-terminal Gly-Gly + 2-[(2R,5Z)-2-carboxy-4-methylthiazol-5(2H)-ylidene]ethyl phosphate + 2 H2O + H(+)</text>
        <dbReference type="Rhea" id="RHEA:26297"/>
        <dbReference type="Rhea" id="RHEA-COMP:12909"/>
        <dbReference type="Rhea" id="RHEA-COMP:19908"/>
        <dbReference type="ChEBI" id="CHEBI:15377"/>
        <dbReference type="ChEBI" id="CHEBI:15378"/>
        <dbReference type="ChEBI" id="CHEBI:57792"/>
        <dbReference type="ChEBI" id="CHEBI:62899"/>
        <dbReference type="ChEBI" id="CHEBI:77846"/>
        <dbReference type="ChEBI" id="CHEBI:90778"/>
        <dbReference type="ChEBI" id="CHEBI:232372"/>
        <dbReference type="EC" id="2.8.1.10"/>
    </reaction>
</comment>
<comment type="pathway">
    <text evidence="1">Cofactor biosynthesis; thiamine diphosphate biosynthesis.</text>
</comment>
<comment type="subunit">
    <text evidence="1">Homotetramer. Forms heterodimers with either ThiH or ThiS.</text>
</comment>
<comment type="subcellular location">
    <subcellularLocation>
        <location evidence="1">Cytoplasm</location>
    </subcellularLocation>
</comment>
<comment type="similarity">
    <text evidence="1">Belongs to the ThiG family.</text>
</comment>
<feature type="chain" id="PRO_1000196837" description="Thiazole synthase">
    <location>
        <begin position="1"/>
        <end position="256"/>
    </location>
</feature>
<feature type="active site" description="Schiff-base intermediate with DXP" evidence="1">
    <location>
        <position position="96"/>
    </location>
</feature>
<feature type="binding site" evidence="1">
    <location>
        <position position="157"/>
    </location>
    <ligand>
        <name>1-deoxy-D-xylulose 5-phosphate</name>
        <dbReference type="ChEBI" id="CHEBI:57792"/>
    </ligand>
</feature>
<feature type="binding site" evidence="1">
    <location>
        <begin position="183"/>
        <end position="184"/>
    </location>
    <ligand>
        <name>1-deoxy-D-xylulose 5-phosphate</name>
        <dbReference type="ChEBI" id="CHEBI:57792"/>
    </ligand>
</feature>
<feature type="binding site" evidence="1">
    <location>
        <begin position="205"/>
        <end position="206"/>
    </location>
    <ligand>
        <name>1-deoxy-D-xylulose 5-phosphate</name>
        <dbReference type="ChEBI" id="CHEBI:57792"/>
    </ligand>
</feature>